<gene>
    <name evidence="1" type="primary">rpsM</name>
    <name type="ordered locus">BH0500</name>
</gene>
<evidence type="ECO:0000255" key="1">
    <source>
        <dbReference type="HAMAP-Rule" id="MF_01315"/>
    </source>
</evidence>
<evidence type="ECO:0000256" key="2">
    <source>
        <dbReference type="SAM" id="MobiDB-lite"/>
    </source>
</evidence>
<evidence type="ECO:0000305" key="3"/>
<dbReference type="EMBL" id="CP000048">
    <property type="protein sequence ID" value="AAX17009.1"/>
    <property type="molecule type" value="Genomic_DNA"/>
</dbReference>
<dbReference type="RefSeq" id="WP_012422261.1">
    <property type="nucleotide sequence ID" value="NZ_CP073136.1"/>
</dbReference>
<dbReference type="SMR" id="B2S0K3"/>
<dbReference type="GeneID" id="71843318"/>
<dbReference type="KEGG" id="bhr:BH0500"/>
<dbReference type="HOGENOM" id="CLU_103849_1_2_12"/>
<dbReference type="Proteomes" id="UP000008834">
    <property type="component" value="Chromosome"/>
</dbReference>
<dbReference type="GO" id="GO:0005829">
    <property type="term" value="C:cytosol"/>
    <property type="evidence" value="ECO:0007669"/>
    <property type="project" value="TreeGrafter"/>
</dbReference>
<dbReference type="GO" id="GO:0015935">
    <property type="term" value="C:small ribosomal subunit"/>
    <property type="evidence" value="ECO:0007669"/>
    <property type="project" value="TreeGrafter"/>
</dbReference>
<dbReference type="GO" id="GO:0019843">
    <property type="term" value="F:rRNA binding"/>
    <property type="evidence" value="ECO:0007669"/>
    <property type="project" value="UniProtKB-UniRule"/>
</dbReference>
<dbReference type="GO" id="GO:0003735">
    <property type="term" value="F:structural constituent of ribosome"/>
    <property type="evidence" value="ECO:0007669"/>
    <property type="project" value="InterPro"/>
</dbReference>
<dbReference type="GO" id="GO:0000049">
    <property type="term" value="F:tRNA binding"/>
    <property type="evidence" value="ECO:0007669"/>
    <property type="project" value="UniProtKB-UniRule"/>
</dbReference>
<dbReference type="GO" id="GO:0006412">
    <property type="term" value="P:translation"/>
    <property type="evidence" value="ECO:0007669"/>
    <property type="project" value="UniProtKB-UniRule"/>
</dbReference>
<dbReference type="FunFam" id="1.10.8.50:FF:000001">
    <property type="entry name" value="30S ribosomal protein S13"/>
    <property type="match status" value="1"/>
</dbReference>
<dbReference type="FunFam" id="4.10.910.10:FF:000001">
    <property type="entry name" value="30S ribosomal protein S13"/>
    <property type="match status" value="1"/>
</dbReference>
<dbReference type="Gene3D" id="1.10.8.50">
    <property type="match status" value="1"/>
</dbReference>
<dbReference type="Gene3D" id="4.10.910.10">
    <property type="entry name" value="30s ribosomal protein s13, domain 2"/>
    <property type="match status" value="1"/>
</dbReference>
<dbReference type="HAMAP" id="MF_01315">
    <property type="entry name" value="Ribosomal_uS13"/>
    <property type="match status" value="1"/>
</dbReference>
<dbReference type="InterPro" id="IPR027437">
    <property type="entry name" value="Rbsml_uS13_C"/>
</dbReference>
<dbReference type="InterPro" id="IPR001892">
    <property type="entry name" value="Ribosomal_uS13"/>
</dbReference>
<dbReference type="InterPro" id="IPR010979">
    <property type="entry name" value="Ribosomal_uS13-like_H2TH"/>
</dbReference>
<dbReference type="InterPro" id="IPR019980">
    <property type="entry name" value="Ribosomal_uS13_bac-type"/>
</dbReference>
<dbReference type="InterPro" id="IPR018269">
    <property type="entry name" value="Ribosomal_uS13_CS"/>
</dbReference>
<dbReference type="NCBIfam" id="TIGR03631">
    <property type="entry name" value="uS13_bact"/>
    <property type="match status" value="1"/>
</dbReference>
<dbReference type="PANTHER" id="PTHR10871">
    <property type="entry name" value="30S RIBOSOMAL PROTEIN S13/40S RIBOSOMAL PROTEIN S18"/>
    <property type="match status" value="1"/>
</dbReference>
<dbReference type="PANTHER" id="PTHR10871:SF1">
    <property type="entry name" value="SMALL RIBOSOMAL SUBUNIT PROTEIN US13M"/>
    <property type="match status" value="1"/>
</dbReference>
<dbReference type="Pfam" id="PF00416">
    <property type="entry name" value="Ribosomal_S13"/>
    <property type="match status" value="1"/>
</dbReference>
<dbReference type="PIRSF" id="PIRSF002134">
    <property type="entry name" value="Ribosomal_S13"/>
    <property type="match status" value="1"/>
</dbReference>
<dbReference type="SUPFAM" id="SSF46946">
    <property type="entry name" value="S13-like H2TH domain"/>
    <property type="match status" value="1"/>
</dbReference>
<dbReference type="PROSITE" id="PS00646">
    <property type="entry name" value="RIBOSOMAL_S13_1"/>
    <property type="match status" value="1"/>
</dbReference>
<dbReference type="PROSITE" id="PS50159">
    <property type="entry name" value="RIBOSOMAL_S13_2"/>
    <property type="match status" value="1"/>
</dbReference>
<reference key="1">
    <citation type="submission" date="2004-12" db="EMBL/GenBank/DDBJ databases">
        <title>The genome sequence of Borrelia hermsii and Borrelia turicatae: comparative analysis of two agents of endemic N. America relapsing fever.</title>
        <authorList>
            <person name="Porcella S.F."/>
            <person name="Raffel S.J."/>
            <person name="Schrumpf M.E."/>
            <person name="Montgomery B."/>
            <person name="Smith T."/>
            <person name="Schwan T.G."/>
        </authorList>
    </citation>
    <scope>NUCLEOTIDE SEQUENCE [LARGE SCALE GENOMIC DNA]</scope>
    <source>
        <strain>HS1 / DAH</strain>
    </source>
</reference>
<accession>B2S0K3</accession>
<feature type="chain" id="PRO_1000141225" description="Small ribosomal subunit protein uS13">
    <location>
        <begin position="1"/>
        <end position="125"/>
    </location>
</feature>
<feature type="region of interest" description="Disordered" evidence="2">
    <location>
        <begin position="97"/>
        <end position="125"/>
    </location>
</feature>
<organism>
    <name type="scientific">Borrelia hermsii (strain HS1 / DAH)</name>
    <dbReference type="NCBI Taxonomy" id="314723"/>
    <lineage>
        <taxon>Bacteria</taxon>
        <taxon>Pseudomonadati</taxon>
        <taxon>Spirochaetota</taxon>
        <taxon>Spirochaetia</taxon>
        <taxon>Spirochaetales</taxon>
        <taxon>Borreliaceae</taxon>
        <taxon>Borrelia</taxon>
    </lineage>
</organism>
<keyword id="KW-0687">Ribonucleoprotein</keyword>
<keyword id="KW-0689">Ribosomal protein</keyword>
<keyword id="KW-0694">RNA-binding</keyword>
<keyword id="KW-0699">rRNA-binding</keyword>
<keyword id="KW-0820">tRNA-binding</keyword>
<protein>
    <recommendedName>
        <fullName evidence="1">Small ribosomal subunit protein uS13</fullName>
    </recommendedName>
    <alternativeName>
        <fullName evidence="3">30S ribosomal protein S13</fullName>
    </alternativeName>
</protein>
<comment type="function">
    <text evidence="1">Located at the top of the head of the 30S subunit, it contacts several helices of the 16S rRNA. In the 70S ribosome it contacts the 23S rRNA (bridge B1a) and protein L5 of the 50S subunit (bridge B1b), connecting the 2 subunits; these bridges are implicated in subunit movement. Contacts the tRNAs in the A and P-sites.</text>
</comment>
<comment type="subunit">
    <text evidence="1">Part of the 30S ribosomal subunit. Forms a loose heterodimer with protein S19. Forms two bridges to the 50S subunit in the 70S ribosome.</text>
</comment>
<comment type="similarity">
    <text evidence="1">Belongs to the universal ribosomal protein uS13 family.</text>
</comment>
<proteinExistence type="inferred from homology"/>
<name>RS13_BORHD</name>
<sequence>MARIAGIDLPNNKQLQIALTSIYGIGRARALEICEKTGVLPDKRAKELDNDEVNKLRKIIESDYVVEGKLRSELAMSIKRLMDIACYRGLRHRKGLPLRGQRTKTNARTRKGKRKTVANKKMASK</sequence>